<sequence length="185" mass="21117">MSKAKTLLMSCFLLLSVTACAPKDQAADMDYDQTKKMVVDILKTDDGKKAIKELLNDDAMNEALVIDQDAIKGTIEKTLTSKKGEEFWKNIFEDTDFAEGFAKTLQTEHEKVIKKLMKDPDYQKMLMSVMQDPGMDKKYSQLAKSQEFRSYLEEVINETLSSPLYKKQFEDELKKAAKDTAKESE</sequence>
<reference key="1">
    <citation type="journal article" date="1989" name="J. Gen. Microbiol.">
        <title>Cloning and sequencing of the gerD gene of Bacillus subtilis.</title>
        <authorList>
            <person name="Yon J.R."/>
            <person name="Sammons R.L."/>
            <person name="Smith D.A."/>
        </authorList>
    </citation>
    <scope>NUCLEOTIDE SEQUENCE [GENOMIC DNA]</scope>
    <source>
        <strain>168</strain>
    </source>
</reference>
<reference key="2">
    <citation type="journal article" date="1996" name="Microbiology">
        <title>Sequence analysis of a 50 kb region between spo0H and rrnH on the Bacillus subtilis chromosome.</title>
        <authorList>
            <person name="Yasumoto K."/>
            <person name="Liu H."/>
            <person name="Jeong S.M."/>
            <person name="Ohashi Y."/>
            <person name="Kakinuma S."/>
            <person name="Tanaka K."/>
            <person name="Kawamura F."/>
            <person name="Yoshikawa H."/>
            <person name="Takahashi H."/>
        </authorList>
    </citation>
    <scope>NUCLEOTIDE SEQUENCE [GENOMIC DNA]</scope>
    <source>
        <strain>168</strain>
    </source>
</reference>
<reference key="3">
    <citation type="journal article" date="1997" name="Nature">
        <title>The complete genome sequence of the Gram-positive bacterium Bacillus subtilis.</title>
        <authorList>
            <person name="Kunst F."/>
            <person name="Ogasawara N."/>
            <person name="Moszer I."/>
            <person name="Albertini A.M."/>
            <person name="Alloni G."/>
            <person name="Azevedo V."/>
            <person name="Bertero M.G."/>
            <person name="Bessieres P."/>
            <person name="Bolotin A."/>
            <person name="Borchert S."/>
            <person name="Borriss R."/>
            <person name="Boursier L."/>
            <person name="Brans A."/>
            <person name="Braun M."/>
            <person name="Brignell S.C."/>
            <person name="Bron S."/>
            <person name="Brouillet S."/>
            <person name="Bruschi C.V."/>
            <person name="Caldwell B."/>
            <person name="Capuano V."/>
            <person name="Carter N.M."/>
            <person name="Choi S.-K."/>
            <person name="Codani J.-J."/>
            <person name="Connerton I.F."/>
            <person name="Cummings N.J."/>
            <person name="Daniel R.A."/>
            <person name="Denizot F."/>
            <person name="Devine K.M."/>
            <person name="Duesterhoeft A."/>
            <person name="Ehrlich S.D."/>
            <person name="Emmerson P.T."/>
            <person name="Entian K.-D."/>
            <person name="Errington J."/>
            <person name="Fabret C."/>
            <person name="Ferrari E."/>
            <person name="Foulger D."/>
            <person name="Fritz C."/>
            <person name="Fujita M."/>
            <person name="Fujita Y."/>
            <person name="Fuma S."/>
            <person name="Galizzi A."/>
            <person name="Galleron N."/>
            <person name="Ghim S.-Y."/>
            <person name="Glaser P."/>
            <person name="Goffeau A."/>
            <person name="Golightly E.J."/>
            <person name="Grandi G."/>
            <person name="Guiseppi G."/>
            <person name="Guy B.J."/>
            <person name="Haga K."/>
            <person name="Haiech J."/>
            <person name="Harwood C.R."/>
            <person name="Henaut A."/>
            <person name="Hilbert H."/>
            <person name="Holsappel S."/>
            <person name="Hosono S."/>
            <person name="Hullo M.-F."/>
            <person name="Itaya M."/>
            <person name="Jones L.-M."/>
            <person name="Joris B."/>
            <person name="Karamata D."/>
            <person name="Kasahara Y."/>
            <person name="Klaerr-Blanchard M."/>
            <person name="Klein C."/>
            <person name="Kobayashi Y."/>
            <person name="Koetter P."/>
            <person name="Koningstein G."/>
            <person name="Krogh S."/>
            <person name="Kumano M."/>
            <person name="Kurita K."/>
            <person name="Lapidus A."/>
            <person name="Lardinois S."/>
            <person name="Lauber J."/>
            <person name="Lazarevic V."/>
            <person name="Lee S.-M."/>
            <person name="Levine A."/>
            <person name="Liu H."/>
            <person name="Masuda S."/>
            <person name="Mauel C."/>
            <person name="Medigue C."/>
            <person name="Medina N."/>
            <person name="Mellado R.P."/>
            <person name="Mizuno M."/>
            <person name="Moestl D."/>
            <person name="Nakai S."/>
            <person name="Noback M."/>
            <person name="Noone D."/>
            <person name="O'Reilly M."/>
            <person name="Ogawa K."/>
            <person name="Ogiwara A."/>
            <person name="Oudega B."/>
            <person name="Park S.-H."/>
            <person name="Parro V."/>
            <person name="Pohl T.M."/>
            <person name="Portetelle D."/>
            <person name="Porwollik S."/>
            <person name="Prescott A.M."/>
            <person name="Presecan E."/>
            <person name="Pujic P."/>
            <person name="Purnelle B."/>
            <person name="Rapoport G."/>
            <person name="Rey M."/>
            <person name="Reynolds S."/>
            <person name="Rieger M."/>
            <person name="Rivolta C."/>
            <person name="Rocha E."/>
            <person name="Roche B."/>
            <person name="Rose M."/>
            <person name="Sadaie Y."/>
            <person name="Sato T."/>
            <person name="Scanlan E."/>
            <person name="Schleich S."/>
            <person name="Schroeter R."/>
            <person name="Scoffone F."/>
            <person name="Sekiguchi J."/>
            <person name="Sekowska A."/>
            <person name="Seror S.J."/>
            <person name="Serror P."/>
            <person name="Shin B.-S."/>
            <person name="Soldo B."/>
            <person name="Sorokin A."/>
            <person name="Tacconi E."/>
            <person name="Takagi T."/>
            <person name="Takahashi H."/>
            <person name="Takemaru K."/>
            <person name="Takeuchi M."/>
            <person name="Tamakoshi A."/>
            <person name="Tanaka T."/>
            <person name="Terpstra P."/>
            <person name="Tognoni A."/>
            <person name="Tosato V."/>
            <person name="Uchiyama S."/>
            <person name="Vandenbol M."/>
            <person name="Vannier F."/>
            <person name="Vassarotti A."/>
            <person name="Viari A."/>
            <person name="Wambutt R."/>
            <person name="Wedler E."/>
            <person name="Wedler H."/>
            <person name="Weitzenegger T."/>
            <person name="Winters P."/>
            <person name="Wipat A."/>
            <person name="Yamamoto H."/>
            <person name="Yamane K."/>
            <person name="Yasumoto K."/>
            <person name="Yata K."/>
            <person name="Yoshida K."/>
            <person name="Yoshikawa H.-F."/>
            <person name="Zumstein E."/>
            <person name="Yoshikawa H."/>
            <person name="Danchin A."/>
        </authorList>
    </citation>
    <scope>NUCLEOTIDE SEQUENCE [LARGE SCALE GENOMIC DNA]</scope>
    <source>
        <strain>168</strain>
    </source>
</reference>
<reference key="4">
    <citation type="journal article" date="1996" name="J. Bacteriol.">
        <title>Identification of a membrane protein involved in activation of the KinB pathway to sporulation in Bacillus subtilis.</title>
        <authorList>
            <person name="Dartois V."/>
            <person name="Djavakhishvili T."/>
            <person name="Hoch J.A."/>
        </authorList>
    </citation>
    <scope>NUCLEOTIDE SEQUENCE [GENOMIC DNA] OF 1-84</scope>
    <source>
        <strain>168 / JH642</strain>
    </source>
</reference>
<reference key="5">
    <citation type="journal article" date="1995" name="J. Bacteriol.">
        <title>Nucleotide sequence and regulation of a new putative cell wall hydrolase gene, cwlD, which affects germination in Bacillus subtilis.</title>
        <authorList>
            <person name="Sekiguchi J."/>
            <person name="Akeo K."/>
            <person name="Yamamoto H."/>
            <person name="Khasanov F.K."/>
            <person name="Alonso J.C."/>
            <person name="Kuroda A."/>
        </authorList>
    </citation>
    <scope>NUCLEOTIDE SEQUENCE [GENOMIC DNA] OF 147-185</scope>
</reference>
<proteinExistence type="evidence at transcript level"/>
<evidence type="ECO:0000255" key="1">
    <source>
        <dbReference type="PROSITE-ProRule" id="PRU00303"/>
    </source>
</evidence>
<evidence type="ECO:0000305" key="2"/>
<protein>
    <recommendedName>
        <fullName>Spore germination protein GerD</fullName>
    </recommendedName>
</protein>
<accession>P16450</accession>
<name>GERD_BACSU</name>
<keyword id="KW-1003">Cell membrane</keyword>
<keyword id="KW-0309">Germination</keyword>
<keyword id="KW-0449">Lipoprotein</keyword>
<keyword id="KW-0472">Membrane</keyword>
<keyword id="KW-0564">Palmitate</keyword>
<keyword id="KW-1185">Reference proteome</keyword>
<keyword id="KW-0732">Signal</keyword>
<feature type="signal peptide" evidence="1">
    <location>
        <begin position="1"/>
        <end position="19"/>
    </location>
</feature>
<feature type="chain" id="PRO_0000018177" description="Spore germination protein GerD">
    <location>
        <begin position="20"/>
        <end position="185"/>
    </location>
</feature>
<feature type="lipid moiety-binding region" description="N-palmitoyl cysteine" evidence="2">
    <location>
        <position position="20"/>
    </location>
</feature>
<feature type="lipid moiety-binding region" description="S-diacylglycerol cysteine" evidence="2">
    <location>
        <position position="20"/>
    </location>
</feature>
<organism>
    <name type="scientific">Bacillus subtilis (strain 168)</name>
    <dbReference type="NCBI Taxonomy" id="224308"/>
    <lineage>
        <taxon>Bacteria</taxon>
        <taxon>Bacillati</taxon>
        <taxon>Bacillota</taxon>
        <taxon>Bacilli</taxon>
        <taxon>Bacillales</taxon>
        <taxon>Bacillaceae</taxon>
        <taxon>Bacillus</taxon>
    </lineage>
</organism>
<dbReference type="EMBL" id="M27259">
    <property type="protein sequence ID" value="AAA22470.1"/>
    <property type="molecule type" value="Genomic_DNA"/>
</dbReference>
<dbReference type="EMBL" id="D64126">
    <property type="protein sequence ID" value="BAA10995.1"/>
    <property type="molecule type" value="Genomic_DNA"/>
</dbReference>
<dbReference type="EMBL" id="AL009126">
    <property type="protein sequence ID" value="CAB11931.1"/>
    <property type="molecule type" value="Genomic_DNA"/>
</dbReference>
<dbReference type="EMBL" id="U23797">
    <property type="protein sequence ID" value="AAC43999.1"/>
    <property type="molecule type" value="Genomic_DNA"/>
</dbReference>
<dbReference type="EMBL" id="X74737">
    <property type="protein sequence ID" value="CAA52757.1"/>
    <property type="molecule type" value="Genomic_DNA"/>
</dbReference>
<dbReference type="PIR" id="A37207">
    <property type="entry name" value="A37207"/>
</dbReference>
<dbReference type="RefSeq" id="NP_388036.1">
    <property type="nucleotide sequence ID" value="NC_000964.3"/>
</dbReference>
<dbReference type="RefSeq" id="WP_003235126.1">
    <property type="nucleotide sequence ID" value="NZ_OZ025638.1"/>
</dbReference>
<dbReference type="SMR" id="P16450"/>
<dbReference type="FunCoup" id="P16450">
    <property type="interactions" value="72"/>
</dbReference>
<dbReference type="STRING" id="224308.BSU01550"/>
<dbReference type="PaxDb" id="224308-BSU01550"/>
<dbReference type="DNASU" id="938910"/>
<dbReference type="EnsemblBacteria" id="CAB11931">
    <property type="protein sequence ID" value="CAB11931"/>
    <property type="gene ID" value="BSU_01550"/>
</dbReference>
<dbReference type="GeneID" id="938910"/>
<dbReference type="KEGG" id="bsu:BSU01550"/>
<dbReference type="PATRIC" id="fig|224308.179.peg.159"/>
<dbReference type="eggNOG" id="ENOG5032TXD">
    <property type="taxonomic scope" value="Bacteria"/>
</dbReference>
<dbReference type="InParanoid" id="P16450"/>
<dbReference type="OrthoDB" id="2375836at2"/>
<dbReference type="BioCyc" id="BSUB:BSU01550-MONOMER"/>
<dbReference type="Proteomes" id="UP000001570">
    <property type="component" value="Chromosome"/>
</dbReference>
<dbReference type="GO" id="GO:0005886">
    <property type="term" value="C:plasma membrane"/>
    <property type="evidence" value="ECO:0000314"/>
    <property type="project" value="CACAO"/>
</dbReference>
<dbReference type="GO" id="GO:0031160">
    <property type="term" value="C:spore wall"/>
    <property type="evidence" value="ECO:0000314"/>
    <property type="project" value="CACAO"/>
</dbReference>
<dbReference type="InterPro" id="IPR041262">
    <property type="entry name" value="GerD_central"/>
</dbReference>
<dbReference type="NCBIfam" id="NF040801">
    <property type="entry name" value="spore_GerD"/>
    <property type="match status" value="1"/>
</dbReference>
<dbReference type="Pfam" id="PF17898">
    <property type="entry name" value="GerD"/>
    <property type="match status" value="1"/>
</dbReference>
<dbReference type="PROSITE" id="PS51257">
    <property type="entry name" value="PROKAR_LIPOPROTEIN"/>
    <property type="match status" value="1"/>
</dbReference>
<gene>
    <name type="primary">gerD</name>
    <name type="ordered locus">BSU01550</name>
</gene>
<comment type="function">
    <text>May be involved in fructose recognition during germination.</text>
</comment>
<comment type="subcellular location">
    <subcellularLocation>
        <location evidence="2">Cell membrane</location>
        <topology evidence="2">Lipid-anchor</topology>
    </subcellularLocation>
</comment>
<comment type="developmental stage">
    <text>Active between T2 and T6 of sporulation.</text>
</comment>